<keyword id="KW-0028">Amino-acid biosynthesis</keyword>
<keyword id="KW-0963">Cytoplasm</keyword>
<keyword id="KW-0521">NADP</keyword>
<keyword id="KW-0560">Oxidoreductase</keyword>
<keyword id="KW-0641">Proline biosynthesis</keyword>
<keyword id="KW-1185">Reference proteome</keyword>
<accession>Q2LU85</accession>
<reference key="1">
    <citation type="journal article" date="2007" name="Proc. Natl. Acad. Sci. U.S.A.">
        <title>The genome of Syntrophus aciditrophicus: life at the thermodynamic limit of microbial growth.</title>
        <authorList>
            <person name="McInerney M.J."/>
            <person name="Rohlin L."/>
            <person name="Mouttaki H."/>
            <person name="Kim U."/>
            <person name="Krupp R.S."/>
            <person name="Rios-Hernandez L."/>
            <person name="Sieber J."/>
            <person name="Struchtemeyer C.G."/>
            <person name="Bhattacharyya A."/>
            <person name="Campbell J.W."/>
            <person name="Gunsalus R.P."/>
        </authorList>
    </citation>
    <scope>NUCLEOTIDE SEQUENCE [LARGE SCALE GENOMIC DNA]</scope>
    <source>
        <strain>SB</strain>
    </source>
</reference>
<dbReference type="EC" id="1.2.1.41" evidence="1"/>
<dbReference type="EMBL" id="CP000252">
    <property type="protein sequence ID" value="ABC77650.1"/>
    <property type="molecule type" value="Genomic_DNA"/>
</dbReference>
<dbReference type="RefSeq" id="WP_011417671.1">
    <property type="nucleotide sequence ID" value="NC_007759.1"/>
</dbReference>
<dbReference type="SMR" id="Q2LU85"/>
<dbReference type="FunCoup" id="Q2LU85">
    <property type="interactions" value="378"/>
</dbReference>
<dbReference type="STRING" id="56780.SYN_02002"/>
<dbReference type="KEGG" id="sat:SYN_02002"/>
<dbReference type="eggNOG" id="COG0014">
    <property type="taxonomic scope" value="Bacteria"/>
</dbReference>
<dbReference type="HOGENOM" id="CLU_030231_0_0_7"/>
<dbReference type="InParanoid" id="Q2LU85"/>
<dbReference type="OrthoDB" id="9809970at2"/>
<dbReference type="UniPathway" id="UPA00098">
    <property type="reaction ID" value="UER00360"/>
</dbReference>
<dbReference type="Proteomes" id="UP000001933">
    <property type="component" value="Chromosome"/>
</dbReference>
<dbReference type="GO" id="GO:0005737">
    <property type="term" value="C:cytoplasm"/>
    <property type="evidence" value="ECO:0007669"/>
    <property type="project" value="UniProtKB-SubCell"/>
</dbReference>
<dbReference type="GO" id="GO:0004350">
    <property type="term" value="F:glutamate-5-semialdehyde dehydrogenase activity"/>
    <property type="evidence" value="ECO:0007669"/>
    <property type="project" value="UniProtKB-UniRule"/>
</dbReference>
<dbReference type="GO" id="GO:0050661">
    <property type="term" value="F:NADP binding"/>
    <property type="evidence" value="ECO:0007669"/>
    <property type="project" value="InterPro"/>
</dbReference>
<dbReference type="GO" id="GO:0055129">
    <property type="term" value="P:L-proline biosynthetic process"/>
    <property type="evidence" value="ECO:0007669"/>
    <property type="project" value="UniProtKB-UniRule"/>
</dbReference>
<dbReference type="CDD" id="cd07079">
    <property type="entry name" value="ALDH_F18-19_ProA-GPR"/>
    <property type="match status" value="1"/>
</dbReference>
<dbReference type="FunFam" id="3.40.309.10:FF:000006">
    <property type="entry name" value="Gamma-glutamyl phosphate reductase"/>
    <property type="match status" value="1"/>
</dbReference>
<dbReference type="Gene3D" id="3.40.605.10">
    <property type="entry name" value="Aldehyde Dehydrogenase, Chain A, domain 1"/>
    <property type="match status" value="1"/>
</dbReference>
<dbReference type="Gene3D" id="3.40.309.10">
    <property type="entry name" value="Aldehyde Dehydrogenase, Chain A, domain 2"/>
    <property type="match status" value="1"/>
</dbReference>
<dbReference type="HAMAP" id="MF_00412">
    <property type="entry name" value="ProA"/>
    <property type="match status" value="1"/>
</dbReference>
<dbReference type="InterPro" id="IPR016161">
    <property type="entry name" value="Ald_DH/histidinol_DH"/>
</dbReference>
<dbReference type="InterPro" id="IPR016163">
    <property type="entry name" value="Ald_DH_C"/>
</dbReference>
<dbReference type="InterPro" id="IPR016162">
    <property type="entry name" value="Ald_DH_N"/>
</dbReference>
<dbReference type="InterPro" id="IPR015590">
    <property type="entry name" value="Aldehyde_DH_dom"/>
</dbReference>
<dbReference type="InterPro" id="IPR020593">
    <property type="entry name" value="G-glutamylP_reductase_CS"/>
</dbReference>
<dbReference type="InterPro" id="IPR012134">
    <property type="entry name" value="Glu-5-SA_DH"/>
</dbReference>
<dbReference type="InterPro" id="IPR000965">
    <property type="entry name" value="GPR_dom"/>
</dbReference>
<dbReference type="NCBIfam" id="NF001221">
    <property type="entry name" value="PRK00197.1"/>
    <property type="match status" value="1"/>
</dbReference>
<dbReference type="NCBIfam" id="TIGR00407">
    <property type="entry name" value="proA"/>
    <property type="match status" value="1"/>
</dbReference>
<dbReference type="PANTHER" id="PTHR11063:SF8">
    <property type="entry name" value="DELTA-1-PYRROLINE-5-CARBOXYLATE SYNTHASE"/>
    <property type="match status" value="1"/>
</dbReference>
<dbReference type="PANTHER" id="PTHR11063">
    <property type="entry name" value="GLUTAMATE SEMIALDEHYDE DEHYDROGENASE"/>
    <property type="match status" value="1"/>
</dbReference>
<dbReference type="Pfam" id="PF00171">
    <property type="entry name" value="Aldedh"/>
    <property type="match status" value="1"/>
</dbReference>
<dbReference type="PIRSF" id="PIRSF000151">
    <property type="entry name" value="GPR"/>
    <property type="match status" value="1"/>
</dbReference>
<dbReference type="SUPFAM" id="SSF53720">
    <property type="entry name" value="ALDH-like"/>
    <property type="match status" value="1"/>
</dbReference>
<dbReference type="PROSITE" id="PS01223">
    <property type="entry name" value="PROA"/>
    <property type="match status" value="1"/>
</dbReference>
<organism>
    <name type="scientific">Syntrophus aciditrophicus (strain SB)</name>
    <dbReference type="NCBI Taxonomy" id="56780"/>
    <lineage>
        <taxon>Bacteria</taxon>
        <taxon>Pseudomonadati</taxon>
        <taxon>Thermodesulfobacteriota</taxon>
        <taxon>Syntrophia</taxon>
        <taxon>Syntrophales</taxon>
        <taxon>Syntrophaceae</taxon>
        <taxon>Syntrophus</taxon>
    </lineage>
</organism>
<comment type="function">
    <text evidence="1">Catalyzes the NADPH-dependent reduction of L-glutamate 5-phosphate into L-glutamate 5-semialdehyde and phosphate. The product spontaneously undergoes cyclization to form 1-pyrroline-5-carboxylate.</text>
</comment>
<comment type="catalytic activity">
    <reaction evidence="1">
        <text>L-glutamate 5-semialdehyde + phosphate + NADP(+) = L-glutamyl 5-phosphate + NADPH + H(+)</text>
        <dbReference type="Rhea" id="RHEA:19541"/>
        <dbReference type="ChEBI" id="CHEBI:15378"/>
        <dbReference type="ChEBI" id="CHEBI:43474"/>
        <dbReference type="ChEBI" id="CHEBI:57783"/>
        <dbReference type="ChEBI" id="CHEBI:58066"/>
        <dbReference type="ChEBI" id="CHEBI:58274"/>
        <dbReference type="ChEBI" id="CHEBI:58349"/>
        <dbReference type="EC" id="1.2.1.41"/>
    </reaction>
</comment>
<comment type="pathway">
    <text evidence="1">Amino-acid biosynthesis; L-proline biosynthesis; L-glutamate 5-semialdehyde from L-glutamate: step 2/2.</text>
</comment>
<comment type="subcellular location">
    <subcellularLocation>
        <location evidence="1">Cytoplasm</location>
    </subcellularLocation>
</comment>
<comment type="similarity">
    <text evidence="1">Belongs to the gamma-glutamyl phosphate reductase family.</text>
</comment>
<name>PROA_SYNAS</name>
<feature type="chain" id="PRO_0000252603" description="Gamma-glutamyl phosphate reductase">
    <location>
        <begin position="1"/>
        <end position="418"/>
    </location>
</feature>
<feature type="region of interest" description="Disordered" evidence="2">
    <location>
        <begin position="1"/>
        <end position="22"/>
    </location>
</feature>
<feature type="compositionally biased region" description="Basic and acidic residues" evidence="2">
    <location>
        <begin position="1"/>
        <end position="18"/>
    </location>
</feature>
<proteinExistence type="inferred from homology"/>
<gene>
    <name evidence="1" type="primary">proA</name>
    <name type="ordered locus">SYNAS_17700</name>
    <name type="ORF">SYN_02002</name>
</gene>
<evidence type="ECO:0000255" key="1">
    <source>
        <dbReference type="HAMAP-Rule" id="MF_00412"/>
    </source>
</evidence>
<evidence type="ECO:0000256" key="2">
    <source>
        <dbReference type="SAM" id="MobiDB-lite"/>
    </source>
</evidence>
<protein>
    <recommendedName>
        <fullName evidence="1">Gamma-glutamyl phosphate reductase</fullName>
        <shortName evidence="1">GPR</shortName>
        <ecNumber evidence="1">1.2.1.41</ecNumber>
    </recommendedName>
    <alternativeName>
        <fullName evidence="1">Glutamate-5-semialdehyde dehydrogenase</fullName>
    </alternativeName>
    <alternativeName>
        <fullName evidence="1">Glutamyl-gamma-semialdehyde dehydrogenase</fullName>
        <shortName evidence="1">GSA dehydrogenase</shortName>
    </alternativeName>
</protein>
<sequence length="418" mass="46149">MAIQDEMRQVAEGAREASRTLSRMPTEIKDRALKEMAERLLQQAGWLMQENEKDVAFAKNLGLSPAMIDRLTLKESTIRDMADGILEVASLPDPVGKVTSMWRRPNGLLVGRMRIPLGVIGIIYESRPNVTADAAALCLKSGNAVILRGGSEAIHSNIAIGRLLKDVLKETSLPEAAIQVVETTDREAVYELLQLEEYIDLIIPRGGEDLIRAVVRQSRIPVIKHYKGVCHVFVDADADLEMAAKICLNAKIQRPGVCNAMETLLVHREAAPRFLPELARKLRESHVVIRGCEETCALISDAEQATEADWYREYLDLVLSIRVVGGIEEAMDHIARYGSLHTESIVTNDYANAQRFLNEVNSSTVLVNASTRFSDGFQLGLGAEIGISTTKLHAYGPMGLEELTTTKFIVYGNGQVRT</sequence>